<reference key="1">
    <citation type="journal article" date="2006" name="Proc. Natl. Acad. Sci. U.S.A.">
        <title>Comparative genomics of the lactic acid bacteria.</title>
        <authorList>
            <person name="Makarova K.S."/>
            <person name="Slesarev A."/>
            <person name="Wolf Y.I."/>
            <person name="Sorokin A."/>
            <person name="Mirkin B."/>
            <person name="Koonin E.V."/>
            <person name="Pavlov A."/>
            <person name="Pavlova N."/>
            <person name="Karamychev V."/>
            <person name="Polouchine N."/>
            <person name="Shakhova V."/>
            <person name="Grigoriev I."/>
            <person name="Lou Y."/>
            <person name="Rohksar D."/>
            <person name="Lucas S."/>
            <person name="Huang K."/>
            <person name="Goodstein D.M."/>
            <person name="Hawkins T."/>
            <person name="Plengvidhya V."/>
            <person name="Welker D."/>
            <person name="Hughes J."/>
            <person name="Goh Y."/>
            <person name="Benson A."/>
            <person name="Baldwin K."/>
            <person name="Lee J.-H."/>
            <person name="Diaz-Muniz I."/>
            <person name="Dosti B."/>
            <person name="Smeianov V."/>
            <person name="Wechter W."/>
            <person name="Barabote R."/>
            <person name="Lorca G."/>
            <person name="Altermann E."/>
            <person name="Barrangou R."/>
            <person name="Ganesan B."/>
            <person name="Xie Y."/>
            <person name="Rawsthorne H."/>
            <person name="Tamir D."/>
            <person name="Parker C."/>
            <person name="Breidt F."/>
            <person name="Broadbent J.R."/>
            <person name="Hutkins R."/>
            <person name="O'Sullivan D."/>
            <person name="Steele J."/>
            <person name="Unlu G."/>
            <person name="Saier M.H. Jr."/>
            <person name="Klaenhammer T."/>
            <person name="Richardson P."/>
            <person name="Kozyavkin S."/>
            <person name="Weimer B.C."/>
            <person name="Mills D.A."/>
        </authorList>
    </citation>
    <scope>NUCLEOTIDE SEQUENCE [LARGE SCALE GENOMIC DNA]</scope>
    <source>
        <strain>ATCC 25745 / CCUG 21536 / LMG 10740 / 183-1w</strain>
    </source>
</reference>
<accession>Q03EW6</accession>
<evidence type="ECO:0000255" key="1">
    <source>
        <dbReference type="HAMAP-Rule" id="MF_00361"/>
    </source>
</evidence>
<protein>
    <recommendedName>
        <fullName evidence="1">NAD kinase</fullName>
        <ecNumber evidence="1">2.7.1.23</ecNumber>
    </recommendedName>
    <alternativeName>
        <fullName evidence="1">ATP-dependent NAD kinase</fullName>
    </alternativeName>
</protein>
<sequence length="269" mass="30104">MRVAIYHSSDEHSIQVGKDLAKILSQNEIVIDNEKPTVVITIGGDGTLLSAVQKYLNLLEEVRFVGVHTGHLGFYTDWREYELETLVKALKSDGGAEVSYPLLNIDVTHTDGSHISYKAVNESTLRKLSGTMVADVLIGDNLFERFRGDGLCISTPTGSTAYNRSVGGAIVHPRLEVLQMAEIASINNRVFRTVGASLIMAPNETITIRPVPSFHRTYNFTADRIDLLDKHVKEVHYSIDEQKVKFLKYRHTGFWNRVRNSFIGSIDEV</sequence>
<organism>
    <name type="scientific">Pediococcus pentosaceus (strain ATCC 25745 / CCUG 21536 / LMG 10740 / 183-1w)</name>
    <dbReference type="NCBI Taxonomy" id="278197"/>
    <lineage>
        <taxon>Bacteria</taxon>
        <taxon>Bacillati</taxon>
        <taxon>Bacillota</taxon>
        <taxon>Bacilli</taxon>
        <taxon>Lactobacillales</taxon>
        <taxon>Lactobacillaceae</taxon>
        <taxon>Pediococcus</taxon>
    </lineage>
</organism>
<feature type="chain" id="PRO_1000059882" description="NAD kinase">
    <location>
        <begin position="1"/>
        <end position="269"/>
    </location>
</feature>
<feature type="active site" description="Proton acceptor" evidence="1">
    <location>
        <position position="45"/>
    </location>
</feature>
<feature type="binding site" evidence="1">
    <location>
        <begin position="45"/>
        <end position="46"/>
    </location>
    <ligand>
        <name>NAD(+)</name>
        <dbReference type="ChEBI" id="CHEBI:57540"/>
    </ligand>
</feature>
<feature type="binding site" evidence="1">
    <location>
        <begin position="121"/>
        <end position="122"/>
    </location>
    <ligand>
        <name>NAD(+)</name>
        <dbReference type="ChEBI" id="CHEBI:57540"/>
    </ligand>
</feature>
<feature type="binding site" evidence="1">
    <location>
        <position position="147"/>
    </location>
    <ligand>
        <name>NAD(+)</name>
        <dbReference type="ChEBI" id="CHEBI:57540"/>
    </ligand>
</feature>
<feature type="binding site" evidence="1">
    <location>
        <position position="149"/>
    </location>
    <ligand>
        <name>NAD(+)</name>
        <dbReference type="ChEBI" id="CHEBI:57540"/>
    </ligand>
</feature>
<feature type="binding site" evidence="1">
    <location>
        <begin position="160"/>
        <end position="165"/>
    </location>
    <ligand>
        <name>NAD(+)</name>
        <dbReference type="ChEBI" id="CHEBI:57540"/>
    </ligand>
</feature>
<feature type="binding site" evidence="1">
    <location>
        <position position="184"/>
    </location>
    <ligand>
        <name>NAD(+)</name>
        <dbReference type="ChEBI" id="CHEBI:57540"/>
    </ligand>
</feature>
<proteinExistence type="inferred from homology"/>
<dbReference type="EC" id="2.7.1.23" evidence="1"/>
<dbReference type="EMBL" id="CP000422">
    <property type="protein sequence ID" value="ABJ68256.1"/>
    <property type="molecule type" value="Genomic_DNA"/>
</dbReference>
<dbReference type="RefSeq" id="WP_011673552.1">
    <property type="nucleotide sequence ID" value="NC_008525.1"/>
</dbReference>
<dbReference type="SMR" id="Q03EW6"/>
<dbReference type="STRING" id="278197.PEPE_1202"/>
<dbReference type="GeneID" id="33062064"/>
<dbReference type="KEGG" id="ppe:PEPE_1202"/>
<dbReference type="eggNOG" id="COG0061">
    <property type="taxonomic scope" value="Bacteria"/>
</dbReference>
<dbReference type="HOGENOM" id="CLU_008831_0_3_9"/>
<dbReference type="OrthoDB" id="9774737at2"/>
<dbReference type="Proteomes" id="UP000000773">
    <property type="component" value="Chromosome"/>
</dbReference>
<dbReference type="GO" id="GO:0005737">
    <property type="term" value="C:cytoplasm"/>
    <property type="evidence" value="ECO:0007669"/>
    <property type="project" value="UniProtKB-SubCell"/>
</dbReference>
<dbReference type="GO" id="GO:0005524">
    <property type="term" value="F:ATP binding"/>
    <property type="evidence" value="ECO:0007669"/>
    <property type="project" value="UniProtKB-KW"/>
</dbReference>
<dbReference type="GO" id="GO:0046872">
    <property type="term" value="F:metal ion binding"/>
    <property type="evidence" value="ECO:0007669"/>
    <property type="project" value="UniProtKB-UniRule"/>
</dbReference>
<dbReference type="GO" id="GO:0051287">
    <property type="term" value="F:NAD binding"/>
    <property type="evidence" value="ECO:0007669"/>
    <property type="project" value="UniProtKB-ARBA"/>
</dbReference>
<dbReference type="GO" id="GO:0003951">
    <property type="term" value="F:NAD+ kinase activity"/>
    <property type="evidence" value="ECO:0007669"/>
    <property type="project" value="UniProtKB-UniRule"/>
</dbReference>
<dbReference type="GO" id="GO:0019674">
    <property type="term" value="P:NAD metabolic process"/>
    <property type="evidence" value="ECO:0007669"/>
    <property type="project" value="InterPro"/>
</dbReference>
<dbReference type="GO" id="GO:0006741">
    <property type="term" value="P:NADP biosynthetic process"/>
    <property type="evidence" value="ECO:0007669"/>
    <property type="project" value="UniProtKB-UniRule"/>
</dbReference>
<dbReference type="Gene3D" id="3.40.50.10330">
    <property type="entry name" value="Probable inorganic polyphosphate/atp-NAD kinase, domain 1"/>
    <property type="match status" value="1"/>
</dbReference>
<dbReference type="Gene3D" id="2.60.200.30">
    <property type="entry name" value="Probable inorganic polyphosphate/atp-NAD kinase, domain 2"/>
    <property type="match status" value="1"/>
</dbReference>
<dbReference type="HAMAP" id="MF_00361">
    <property type="entry name" value="NAD_kinase"/>
    <property type="match status" value="1"/>
</dbReference>
<dbReference type="InterPro" id="IPR017438">
    <property type="entry name" value="ATP-NAD_kinase_N"/>
</dbReference>
<dbReference type="InterPro" id="IPR017437">
    <property type="entry name" value="ATP-NAD_kinase_PpnK-typ_C"/>
</dbReference>
<dbReference type="InterPro" id="IPR016064">
    <property type="entry name" value="NAD/diacylglycerol_kinase_sf"/>
</dbReference>
<dbReference type="InterPro" id="IPR002504">
    <property type="entry name" value="NADK"/>
</dbReference>
<dbReference type="NCBIfam" id="NF003424">
    <property type="entry name" value="PRK04885.1"/>
    <property type="match status" value="1"/>
</dbReference>
<dbReference type="PANTHER" id="PTHR20275">
    <property type="entry name" value="NAD KINASE"/>
    <property type="match status" value="1"/>
</dbReference>
<dbReference type="PANTHER" id="PTHR20275:SF0">
    <property type="entry name" value="NAD KINASE"/>
    <property type="match status" value="1"/>
</dbReference>
<dbReference type="Pfam" id="PF01513">
    <property type="entry name" value="NAD_kinase"/>
    <property type="match status" value="1"/>
</dbReference>
<dbReference type="Pfam" id="PF20143">
    <property type="entry name" value="NAD_kinase_C"/>
    <property type="match status" value="1"/>
</dbReference>
<dbReference type="SUPFAM" id="SSF111331">
    <property type="entry name" value="NAD kinase/diacylglycerol kinase-like"/>
    <property type="match status" value="1"/>
</dbReference>
<gene>
    <name evidence="1" type="primary">nadK</name>
    <name type="ordered locus">PEPE_1202</name>
</gene>
<comment type="function">
    <text evidence="1">Involved in the regulation of the intracellular balance of NAD and NADP, and is a key enzyme in the biosynthesis of NADP. Catalyzes specifically the phosphorylation on 2'-hydroxyl of the adenosine moiety of NAD to yield NADP.</text>
</comment>
<comment type="catalytic activity">
    <reaction evidence="1">
        <text>NAD(+) + ATP = ADP + NADP(+) + H(+)</text>
        <dbReference type="Rhea" id="RHEA:18629"/>
        <dbReference type="ChEBI" id="CHEBI:15378"/>
        <dbReference type="ChEBI" id="CHEBI:30616"/>
        <dbReference type="ChEBI" id="CHEBI:57540"/>
        <dbReference type="ChEBI" id="CHEBI:58349"/>
        <dbReference type="ChEBI" id="CHEBI:456216"/>
        <dbReference type="EC" id="2.7.1.23"/>
    </reaction>
</comment>
<comment type="cofactor">
    <cofactor evidence="1">
        <name>a divalent metal cation</name>
        <dbReference type="ChEBI" id="CHEBI:60240"/>
    </cofactor>
</comment>
<comment type="subcellular location">
    <subcellularLocation>
        <location evidence="1">Cytoplasm</location>
    </subcellularLocation>
</comment>
<comment type="similarity">
    <text evidence="1">Belongs to the NAD kinase family.</text>
</comment>
<keyword id="KW-0067">ATP-binding</keyword>
<keyword id="KW-0963">Cytoplasm</keyword>
<keyword id="KW-0418">Kinase</keyword>
<keyword id="KW-0520">NAD</keyword>
<keyword id="KW-0521">NADP</keyword>
<keyword id="KW-0547">Nucleotide-binding</keyword>
<keyword id="KW-0808">Transferase</keyword>
<name>NADK_PEDPA</name>